<proteinExistence type="evidence at transcript level"/>
<gene>
    <name type="primary">gcnt4</name>
    <name type="ORF">si:ch211-129a6.3</name>
</gene>
<comment type="function">
    <text evidence="2">Glycosyltransferase that mediates core 2 O-glycan branching, an important step in mucin-type biosynthesis.</text>
</comment>
<comment type="catalytic activity">
    <reaction evidence="2">
        <text>a 3-O-[beta-D-galactosyl-(1-&gt;3)-N-acetyl-alpha-D-galactosaminyl]-L-seryl-[protein] + UDP-N-acetyl-alpha-D-glucosamine = 3-O-{beta-D-galactosyl-(1-&gt;3)-[N-acetyl-beta-D-glucosaminyl-(1-&gt;6)]-N-acetyl-alpha-D-galactosaminyl}-L-seryl-[protein] + UDP + H(+)</text>
        <dbReference type="Rhea" id="RHEA:56212"/>
        <dbReference type="Rhea" id="RHEA-COMP:13922"/>
        <dbReference type="Rhea" id="RHEA-COMP:14419"/>
        <dbReference type="ChEBI" id="CHEBI:15378"/>
        <dbReference type="ChEBI" id="CHEBI:57705"/>
        <dbReference type="ChEBI" id="CHEBI:58223"/>
        <dbReference type="ChEBI" id="CHEBI:137949"/>
        <dbReference type="ChEBI" id="CHEBI:139605"/>
        <dbReference type="EC" id="2.4.1.102"/>
    </reaction>
</comment>
<comment type="catalytic activity">
    <reaction evidence="2">
        <text>a 3-O-[beta-D-galactosyl-(1-&gt;3)-N-acetyl-alpha-D-galactosaminyl]-L-threonyl-[protein] + UDP-N-acetyl-alpha-D-glucosamine = a 3-O-{beta-D-galactosyl-(1-&gt;3)-[N-acetyl-beta-D-glucosaminyl-(1-&gt;6)]-N-acetyl-alpha-D-galactosaminyl}-L-threonyl-[protein] + UDP + H(+)</text>
        <dbReference type="Rhea" id="RHEA:56216"/>
        <dbReference type="Rhea" id="RHEA-COMP:13923"/>
        <dbReference type="Rhea" id="RHEA-COMP:14420"/>
        <dbReference type="ChEBI" id="CHEBI:15378"/>
        <dbReference type="ChEBI" id="CHEBI:57705"/>
        <dbReference type="ChEBI" id="CHEBI:58223"/>
        <dbReference type="ChEBI" id="CHEBI:137950"/>
        <dbReference type="ChEBI" id="CHEBI:139607"/>
        <dbReference type="EC" id="2.4.1.102"/>
    </reaction>
</comment>
<comment type="pathway">
    <text>Protein modification; protein glycosylation.</text>
</comment>
<comment type="subcellular location">
    <subcellularLocation>
        <location evidence="1">Golgi apparatus membrane</location>
        <topology evidence="1">Single-pass type II membrane protein</topology>
    </subcellularLocation>
</comment>
<comment type="similarity">
    <text evidence="4">Belongs to the glycosyltransferase 14 family.</text>
</comment>
<keyword id="KW-1015">Disulfide bond</keyword>
<keyword id="KW-0325">Glycoprotein</keyword>
<keyword id="KW-0328">Glycosyltransferase</keyword>
<keyword id="KW-0333">Golgi apparatus</keyword>
<keyword id="KW-0472">Membrane</keyword>
<keyword id="KW-1185">Reference proteome</keyword>
<keyword id="KW-0735">Signal-anchor</keyword>
<keyword id="KW-0808">Transferase</keyword>
<keyword id="KW-0812">Transmembrane</keyword>
<keyword id="KW-1133">Transmembrane helix</keyword>
<feature type="chain" id="PRO_0000288556" description="Beta-1,3-galactosyl-O-glycosyl-glycoprotein beta-1,6-N-acetylglucosaminyltransferase 4">
    <location>
        <begin position="1"/>
        <end position="428"/>
    </location>
</feature>
<feature type="topological domain" description="Cytoplasmic" evidence="3">
    <location>
        <begin position="1"/>
        <end position="12"/>
    </location>
</feature>
<feature type="transmembrane region" description="Helical; Signal-anchor for type II membrane protein" evidence="3">
    <location>
        <begin position="13"/>
        <end position="30"/>
    </location>
</feature>
<feature type="topological domain" description="Lumenal" evidence="3">
    <location>
        <begin position="31"/>
        <end position="428"/>
    </location>
</feature>
<feature type="glycosylation site" description="N-linked (GlcNAc...) asparagine" evidence="3">
    <location>
        <position position="59"/>
    </location>
</feature>
<feature type="disulfide bond" evidence="1">
    <location>
        <begin position="60"/>
        <end position="214"/>
    </location>
</feature>
<feature type="disulfide bond" evidence="1">
    <location>
        <begin position="148"/>
        <end position="369"/>
    </location>
</feature>
<feature type="disulfide bond" evidence="1">
    <location>
        <begin position="169"/>
        <end position="196"/>
    </location>
</feature>
<feature type="disulfide bond" evidence="1">
    <location>
        <begin position="378"/>
        <end position="410"/>
    </location>
</feature>
<feature type="sequence conflict" description="In Ref. 1; AAQ14484 and 2; BX511209." evidence="4" ref="1 2">
    <original>D</original>
    <variation>E</variation>
    <location>
        <position position="65"/>
    </location>
</feature>
<organism>
    <name type="scientific">Danio rerio</name>
    <name type="common">Zebrafish</name>
    <name type="synonym">Brachydanio rerio</name>
    <dbReference type="NCBI Taxonomy" id="7955"/>
    <lineage>
        <taxon>Eukaryota</taxon>
        <taxon>Metazoa</taxon>
        <taxon>Chordata</taxon>
        <taxon>Craniata</taxon>
        <taxon>Vertebrata</taxon>
        <taxon>Euteleostomi</taxon>
        <taxon>Actinopterygii</taxon>
        <taxon>Neopterygii</taxon>
        <taxon>Teleostei</taxon>
        <taxon>Ostariophysi</taxon>
        <taxon>Cypriniformes</taxon>
        <taxon>Danionidae</taxon>
        <taxon>Danioninae</taxon>
        <taxon>Danio</taxon>
    </lineage>
</organism>
<evidence type="ECO:0000250" key="1"/>
<evidence type="ECO:0000250" key="2">
    <source>
        <dbReference type="UniProtKB" id="Q9P109"/>
    </source>
</evidence>
<evidence type="ECO:0000255" key="3"/>
<evidence type="ECO:0000305" key="4"/>
<protein>
    <recommendedName>
        <fullName>Beta-1,3-galactosyl-O-glycosyl-glycoprotein beta-1,6-N-acetylglucosaminyltransferase 4</fullName>
        <ecNumber evidence="2">2.4.1.102</ecNumber>
    </recommendedName>
</protein>
<dbReference type="EC" id="2.4.1.102" evidence="2"/>
<dbReference type="EMBL" id="AF300969">
    <property type="protein sequence ID" value="AAQ14484.1"/>
    <property type="molecule type" value="mRNA"/>
</dbReference>
<dbReference type="EMBL" id="BX511209">
    <property type="status" value="NOT_ANNOTATED_CDS"/>
    <property type="molecule type" value="Genomic_DNA"/>
</dbReference>
<dbReference type="EMBL" id="CU062416">
    <property type="protein sequence ID" value="CAN88495.1"/>
    <property type="molecule type" value="Genomic_DNA"/>
</dbReference>
<dbReference type="EMBL" id="BC075950">
    <property type="protein sequence ID" value="AAH75950.1"/>
    <property type="molecule type" value="mRNA"/>
</dbReference>
<dbReference type="RefSeq" id="NP_963877.1">
    <property type="nucleotide sequence ID" value="NM_201583.1"/>
</dbReference>
<dbReference type="SMR" id="Q71SG7"/>
<dbReference type="FunCoup" id="Q71SG7">
    <property type="interactions" value="93"/>
</dbReference>
<dbReference type="STRING" id="7955.ENSDARP00000050987"/>
<dbReference type="CAZy" id="GT14">
    <property type="family name" value="Glycosyltransferase Family 14"/>
</dbReference>
<dbReference type="GlyCosmos" id="Q71SG7">
    <property type="glycosylation" value="1 site, No reported glycans"/>
</dbReference>
<dbReference type="PaxDb" id="7955-ENSDARP00000050987"/>
<dbReference type="Ensembl" id="ENSDART00000050988">
    <property type="protein sequence ID" value="ENSDARP00000050987"/>
    <property type="gene ID" value="ENSDARG00000035198"/>
</dbReference>
<dbReference type="GeneID" id="324510"/>
<dbReference type="KEGG" id="dre:324510"/>
<dbReference type="AGR" id="ZFIN:ZDB-GENE-030131-3231"/>
<dbReference type="CTD" id="324510"/>
<dbReference type="ZFIN" id="ZDB-GENE-030131-3231">
    <property type="gene designation" value="gcnt4a"/>
</dbReference>
<dbReference type="eggNOG" id="KOG0799">
    <property type="taxonomic scope" value="Eukaryota"/>
</dbReference>
<dbReference type="HOGENOM" id="CLU_032341_1_2_1"/>
<dbReference type="InParanoid" id="Q71SG7"/>
<dbReference type="OMA" id="ERERMFC"/>
<dbReference type="OrthoDB" id="2019572at2759"/>
<dbReference type="PhylomeDB" id="Q71SG7"/>
<dbReference type="TreeFam" id="TF315534"/>
<dbReference type="Reactome" id="R-DRE-913709">
    <property type="pathway name" value="O-linked glycosylation of mucins"/>
</dbReference>
<dbReference type="UniPathway" id="UPA00378"/>
<dbReference type="PRO" id="PR:Q71SG7"/>
<dbReference type="Proteomes" id="UP000000437">
    <property type="component" value="Alternate scaffold 5"/>
</dbReference>
<dbReference type="Proteomes" id="UP000000437">
    <property type="component" value="Chromosome 5"/>
</dbReference>
<dbReference type="Bgee" id="ENSDARG00000035198">
    <property type="expression patterns" value="Expressed in spleen and 21 other cell types or tissues"/>
</dbReference>
<dbReference type="GO" id="GO:0000139">
    <property type="term" value="C:Golgi membrane"/>
    <property type="evidence" value="ECO:0007669"/>
    <property type="project" value="UniProtKB-SubCell"/>
</dbReference>
<dbReference type="GO" id="GO:0008375">
    <property type="term" value="F:acetylglucosaminyltransferase activity"/>
    <property type="evidence" value="ECO:0000318"/>
    <property type="project" value="GO_Central"/>
</dbReference>
<dbReference type="GO" id="GO:0003829">
    <property type="term" value="F:beta-1,3-galactosyl-O-glycosyl-glycoprotein beta-1,6-N-acetylglucosaminyltransferase activity"/>
    <property type="evidence" value="ECO:0007669"/>
    <property type="project" value="UniProtKB-EC"/>
</dbReference>
<dbReference type="GO" id="GO:0006486">
    <property type="term" value="P:protein glycosylation"/>
    <property type="evidence" value="ECO:0007669"/>
    <property type="project" value="UniProtKB-UniPathway"/>
</dbReference>
<dbReference type="InterPro" id="IPR003406">
    <property type="entry name" value="Glyco_trans_14"/>
</dbReference>
<dbReference type="PANTHER" id="PTHR19297:SF7">
    <property type="entry name" value="BETA-1,3-GALACTOSYL-O-GLYCOSYL-GLYCOPROTEIN BETA-1,6-N-ACETYLGLUCOSAMINYLTRANSFERASE 4"/>
    <property type="match status" value="1"/>
</dbReference>
<dbReference type="PANTHER" id="PTHR19297">
    <property type="entry name" value="GLYCOSYLTRANSFERASE 14 FAMILY MEMBER"/>
    <property type="match status" value="1"/>
</dbReference>
<dbReference type="Pfam" id="PF02485">
    <property type="entry name" value="Branch"/>
    <property type="match status" value="1"/>
</dbReference>
<name>GCNT4_DANRE</name>
<sequence length="428" mass="49928">MRRCAVLHRLRCKFYVFVVSLFVVVKLVYLKISMDNSIYIEPYGVTRRSLKPQPLDGINCTAIYDLEPVEIGKSLEMRRKKIVEVDDGRIASFTADCKSYIEQRRYNEVLVTDEECNFPIAYSLVVHKNSAMVERILRAIYAPQNIYCIHYDQKSTKDFIAAMKNLESCFPNVFIASKIESVQYAHITRLKADLNCLSDLLSSEVKWKYVINLCGQDFPLKSNYELVTELRKLNGANMLETSRPSKVKKQRFQFRYQLKDVSYEYQKMPVKTSIAKDPPPHNIEMFVGSAYFVLSRDFVTYVMNNQLAKDFLQWSVDTYSPDEHFWASMARVPGVPGELARSEPDVSDLKSRTRLVKWNYLEERLYPKCTGTHRRSVCIYGAAELRWLLEDGHWFANKFDPKVDPVIIKCLEEKLEEKQLQQCLRRVS</sequence>
<reference key="1">
    <citation type="submission" date="2000-08" db="EMBL/GenBank/DDBJ databases">
        <title>Core 2 b-1,6-N-acetylglucosaminyltransferase.</title>
        <authorList>
            <person name="Schwientek T."/>
            <person name="Clausen H."/>
        </authorList>
    </citation>
    <scope>NUCLEOTIDE SEQUENCE [MRNA]</scope>
</reference>
<reference key="2">
    <citation type="journal article" date="2013" name="Nature">
        <title>The zebrafish reference genome sequence and its relationship to the human genome.</title>
        <authorList>
            <person name="Howe K."/>
            <person name="Clark M.D."/>
            <person name="Torroja C.F."/>
            <person name="Torrance J."/>
            <person name="Berthelot C."/>
            <person name="Muffato M."/>
            <person name="Collins J.E."/>
            <person name="Humphray S."/>
            <person name="McLaren K."/>
            <person name="Matthews L."/>
            <person name="McLaren S."/>
            <person name="Sealy I."/>
            <person name="Caccamo M."/>
            <person name="Churcher C."/>
            <person name="Scott C."/>
            <person name="Barrett J.C."/>
            <person name="Koch R."/>
            <person name="Rauch G.J."/>
            <person name="White S."/>
            <person name="Chow W."/>
            <person name="Kilian B."/>
            <person name="Quintais L.T."/>
            <person name="Guerra-Assuncao J.A."/>
            <person name="Zhou Y."/>
            <person name="Gu Y."/>
            <person name="Yen J."/>
            <person name="Vogel J.H."/>
            <person name="Eyre T."/>
            <person name="Redmond S."/>
            <person name="Banerjee R."/>
            <person name="Chi J."/>
            <person name="Fu B."/>
            <person name="Langley E."/>
            <person name="Maguire S.F."/>
            <person name="Laird G.K."/>
            <person name="Lloyd D."/>
            <person name="Kenyon E."/>
            <person name="Donaldson S."/>
            <person name="Sehra H."/>
            <person name="Almeida-King J."/>
            <person name="Loveland J."/>
            <person name="Trevanion S."/>
            <person name="Jones M."/>
            <person name="Quail M."/>
            <person name="Willey D."/>
            <person name="Hunt A."/>
            <person name="Burton J."/>
            <person name="Sims S."/>
            <person name="McLay K."/>
            <person name="Plumb B."/>
            <person name="Davis J."/>
            <person name="Clee C."/>
            <person name="Oliver K."/>
            <person name="Clark R."/>
            <person name="Riddle C."/>
            <person name="Elliot D."/>
            <person name="Threadgold G."/>
            <person name="Harden G."/>
            <person name="Ware D."/>
            <person name="Begum S."/>
            <person name="Mortimore B."/>
            <person name="Kerry G."/>
            <person name="Heath P."/>
            <person name="Phillimore B."/>
            <person name="Tracey A."/>
            <person name="Corby N."/>
            <person name="Dunn M."/>
            <person name="Johnson C."/>
            <person name="Wood J."/>
            <person name="Clark S."/>
            <person name="Pelan S."/>
            <person name="Griffiths G."/>
            <person name="Smith M."/>
            <person name="Glithero R."/>
            <person name="Howden P."/>
            <person name="Barker N."/>
            <person name="Lloyd C."/>
            <person name="Stevens C."/>
            <person name="Harley J."/>
            <person name="Holt K."/>
            <person name="Panagiotidis G."/>
            <person name="Lovell J."/>
            <person name="Beasley H."/>
            <person name="Henderson C."/>
            <person name="Gordon D."/>
            <person name="Auger K."/>
            <person name="Wright D."/>
            <person name="Collins J."/>
            <person name="Raisen C."/>
            <person name="Dyer L."/>
            <person name="Leung K."/>
            <person name="Robertson L."/>
            <person name="Ambridge K."/>
            <person name="Leongamornlert D."/>
            <person name="McGuire S."/>
            <person name="Gilderthorp R."/>
            <person name="Griffiths C."/>
            <person name="Manthravadi D."/>
            <person name="Nichol S."/>
            <person name="Barker G."/>
            <person name="Whitehead S."/>
            <person name="Kay M."/>
            <person name="Brown J."/>
            <person name="Murnane C."/>
            <person name="Gray E."/>
            <person name="Humphries M."/>
            <person name="Sycamore N."/>
            <person name="Barker D."/>
            <person name="Saunders D."/>
            <person name="Wallis J."/>
            <person name="Babbage A."/>
            <person name="Hammond S."/>
            <person name="Mashreghi-Mohammadi M."/>
            <person name="Barr L."/>
            <person name="Martin S."/>
            <person name="Wray P."/>
            <person name="Ellington A."/>
            <person name="Matthews N."/>
            <person name="Ellwood M."/>
            <person name="Woodmansey R."/>
            <person name="Clark G."/>
            <person name="Cooper J."/>
            <person name="Tromans A."/>
            <person name="Grafham D."/>
            <person name="Skuce C."/>
            <person name="Pandian R."/>
            <person name="Andrews R."/>
            <person name="Harrison E."/>
            <person name="Kimberley A."/>
            <person name="Garnett J."/>
            <person name="Fosker N."/>
            <person name="Hall R."/>
            <person name="Garner P."/>
            <person name="Kelly D."/>
            <person name="Bird C."/>
            <person name="Palmer S."/>
            <person name="Gehring I."/>
            <person name="Berger A."/>
            <person name="Dooley C.M."/>
            <person name="Ersan-Urun Z."/>
            <person name="Eser C."/>
            <person name="Geiger H."/>
            <person name="Geisler M."/>
            <person name="Karotki L."/>
            <person name="Kirn A."/>
            <person name="Konantz J."/>
            <person name="Konantz M."/>
            <person name="Oberlander M."/>
            <person name="Rudolph-Geiger S."/>
            <person name="Teucke M."/>
            <person name="Lanz C."/>
            <person name="Raddatz G."/>
            <person name="Osoegawa K."/>
            <person name="Zhu B."/>
            <person name="Rapp A."/>
            <person name="Widaa S."/>
            <person name="Langford C."/>
            <person name="Yang F."/>
            <person name="Schuster S.C."/>
            <person name="Carter N.P."/>
            <person name="Harrow J."/>
            <person name="Ning Z."/>
            <person name="Herrero J."/>
            <person name="Searle S.M."/>
            <person name="Enright A."/>
            <person name="Geisler R."/>
            <person name="Plasterk R.H."/>
            <person name="Lee C."/>
            <person name="Westerfield M."/>
            <person name="de Jong P.J."/>
            <person name="Zon L.I."/>
            <person name="Postlethwait J.H."/>
            <person name="Nusslein-Volhard C."/>
            <person name="Hubbard T.J."/>
            <person name="Roest Crollius H."/>
            <person name="Rogers J."/>
            <person name="Stemple D.L."/>
        </authorList>
    </citation>
    <scope>NUCLEOTIDE SEQUENCE [LARGE SCALE GENOMIC DNA]</scope>
    <source>
        <strain>Tuebingen</strain>
    </source>
</reference>
<reference key="3">
    <citation type="submission" date="2004-07" db="EMBL/GenBank/DDBJ databases">
        <authorList>
            <consortium name="NIH - Zebrafish Gene Collection (ZGC) project"/>
        </authorList>
    </citation>
    <scope>NUCLEOTIDE SEQUENCE [LARGE SCALE MRNA]</scope>
</reference>
<accession>Q71SG7</accession>
<accession>A5WWG0</accession>
<accession>Q6DHL9</accession>